<feature type="chain" id="PRO_0000066750" description="Neurotoxin BmK-M3">
    <location>
        <begin position="1"/>
        <end position="65"/>
    </location>
</feature>
<feature type="domain" description="LCN-type CS-alpha/beta" evidence="2">
    <location>
        <begin position="2"/>
        <end position="64"/>
    </location>
</feature>
<feature type="disulfide bond" evidence="2">
    <location>
        <begin position="12"/>
        <end position="63"/>
    </location>
</feature>
<feature type="disulfide bond" evidence="2">
    <location>
        <begin position="16"/>
        <end position="36"/>
    </location>
</feature>
<feature type="disulfide bond" evidence="2">
    <location>
        <begin position="22"/>
        <end position="46"/>
    </location>
</feature>
<feature type="disulfide bond" evidence="2">
    <location>
        <begin position="26"/>
        <end position="48"/>
    </location>
</feature>
<evidence type="ECO:0000250" key="1"/>
<evidence type="ECO:0000255" key="2">
    <source>
        <dbReference type="PROSITE-ProRule" id="PRU01210"/>
    </source>
</evidence>
<evidence type="ECO:0000305" key="3"/>
<organism>
    <name type="scientific">Olivierus martensii</name>
    <name type="common">Manchurian scorpion</name>
    <name type="synonym">Mesobuthus martensii</name>
    <dbReference type="NCBI Taxonomy" id="34649"/>
    <lineage>
        <taxon>Eukaryota</taxon>
        <taxon>Metazoa</taxon>
        <taxon>Ecdysozoa</taxon>
        <taxon>Arthropoda</taxon>
        <taxon>Chelicerata</taxon>
        <taxon>Arachnida</taxon>
        <taxon>Scorpiones</taxon>
        <taxon>Buthida</taxon>
        <taxon>Buthoidea</taxon>
        <taxon>Buthidae</taxon>
        <taxon>Olivierus</taxon>
    </lineage>
</organism>
<reference key="1">
    <citation type="journal article" date="1987" name="Sheng Wu Hua Xue Yu Sheng Wu Wu Li Jin Zhan">
        <authorList>
            <person name="Liu J.N."/>
            <person name="Lei K.-J."/>
        </authorList>
    </citation>
    <scope>PROTEIN SEQUENCE</scope>
    <source>
        <tissue>Venom</tissue>
    </source>
</reference>
<dbReference type="GO" id="GO:0005576">
    <property type="term" value="C:extracellular region"/>
    <property type="evidence" value="ECO:0007669"/>
    <property type="project" value="UniProtKB-SubCell"/>
</dbReference>
<dbReference type="GO" id="GO:0019871">
    <property type="term" value="F:sodium channel inhibitor activity"/>
    <property type="evidence" value="ECO:0007669"/>
    <property type="project" value="InterPro"/>
</dbReference>
<dbReference type="GO" id="GO:0090729">
    <property type="term" value="F:toxin activity"/>
    <property type="evidence" value="ECO:0007669"/>
    <property type="project" value="UniProtKB-KW"/>
</dbReference>
<dbReference type="GO" id="GO:0006952">
    <property type="term" value="P:defense response"/>
    <property type="evidence" value="ECO:0007669"/>
    <property type="project" value="InterPro"/>
</dbReference>
<dbReference type="CDD" id="cd23106">
    <property type="entry name" value="neurotoxins_LC_scorpion"/>
    <property type="match status" value="1"/>
</dbReference>
<dbReference type="FunFam" id="3.30.30.10:FF:000002">
    <property type="entry name" value="Alpha-like toxin BmK-M1"/>
    <property type="match status" value="1"/>
</dbReference>
<dbReference type="Gene3D" id="3.30.30.10">
    <property type="entry name" value="Knottin, scorpion toxin-like"/>
    <property type="match status" value="1"/>
</dbReference>
<dbReference type="InterPro" id="IPR044062">
    <property type="entry name" value="LCN-type_CS_alpha_beta_dom"/>
</dbReference>
<dbReference type="InterPro" id="IPR003614">
    <property type="entry name" value="Scorpion_toxin-like"/>
</dbReference>
<dbReference type="InterPro" id="IPR036574">
    <property type="entry name" value="Scorpion_toxin-like_sf"/>
</dbReference>
<dbReference type="InterPro" id="IPR018218">
    <property type="entry name" value="Scorpion_toxinL"/>
</dbReference>
<dbReference type="InterPro" id="IPR002061">
    <property type="entry name" value="Scorpion_toxinL/defensin"/>
</dbReference>
<dbReference type="Pfam" id="PF00537">
    <property type="entry name" value="Toxin_3"/>
    <property type="match status" value="1"/>
</dbReference>
<dbReference type="PRINTS" id="PR00285">
    <property type="entry name" value="SCORPNTOXIN"/>
</dbReference>
<dbReference type="SMART" id="SM00505">
    <property type="entry name" value="Knot1"/>
    <property type="match status" value="1"/>
</dbReference>
<dbReference type="SUPFAM" id="SSF57095">
    <property type="entry name" value="Scorpion toxin-like"/>
    <property type="match status" value="1"/>
</dbReference>
<dbReference type="PROSITE" id="PS51863">
    <property type="entry name" value="LCN_CSAB"/>
    <property type="match status" value="1"/>
</dbReference>
<name>SCX3_OLIMR</name>
<protein>
    <recommendedName>
        <fullName>Neurotoxin BmK-M3</fullName>
        <shortName>BmK3</shortName>
        <shortName>BmKM3</shortName>
        <shortName>Bmk M3</shortName>
    </recommendedName>
    <alternativeName>
        <fullName>BmK III</fullName>
        <shortName>BmKIII</shortName>
    </alternativeName>
    <alternativeName>
        <fullName>BmK-III</fullName>
    </alternativeName>
</protein>
<sequence length="65" mass="7318">VRDAYIAKPENCVYECATNEYCNKLCTDNGAESGYCQWVGRYGNACXCIKLPDRVPIRVWGKCHG</sequence>
<keyword id="KW-0903">Direct protein sequencing</keyword>
<keyword id="KW-1015">Disulfide bond</keyword>
<keyword id="KW-0872">Ion channel impairing toxin</keyword>
<keyword id="KW-0528">Neurotoxin</keyword>
<keyword id="KW-0964">Secreted</keyword>
<keyword id="KW-0800">Toxin</keyword>
<keyword id="KW-0738">Voltage-gated sodium channel impairing toxin</keyword>
<comment type="function">
    <text evidence="1">Binds to sodium channels (Nav) and inhibits the inactivation of the activated channels, thereby blocking neuronal transmission.</text>
</comment>
<comment type="subcellular location">
    <subcellularLocation>
        <location>Secreted</location>
    </subcellularLocation>
</comment>
<comment type="tissue specificity">
    <text>Expressed by the venom gland.</text>
</comment>
<comment type="domain">
    <text evidence="3">Has the structural arrangement of an alpha-helix connected to antiparallel beta-sheets by disulfide bonds (CS-alpha/beta).</text>
</comment>
<comment type="similarity">
    <text evidence="3">Belongs to the long (4 C-C) scorpion toxin superfamily. Sodium channel inhibitor family. Alpha subfamily.</text>
</comment>
<accession>P15227</accession>
<proteinExistence type="evidence at protein level"/>